<accession>B4T9L5</accession>
<feature type="chain" id="PRO_1000186930" description="Allantoinase">
    <location>
        <begin position="1"/>
        <end position="453"/>
    </location>
</feature>
<feature type="binding site" evidence="1">
    <location>
        <position position="59"/>
    </location>
    <ligand>
        <name>Zn(2+)</name>
        <dbReference type="ChEBI" id="CHEBI:29105"/>
        <label>1</label>
    </ligand>
</feature>
<feature type="binding site" evidence="1">
    <location>
        <position position="61"/>
    </location>
    <ligand>
        <name>Zn(2+)</name>
        <dbReference type="ChEBI" id="CHEBI:29105"/>
        <label>1</label>
    </ligand>
</feature>
<feature type="binding site" description="via carbamate group" evidence="1">
    <location>
        <position position="146"/>
    </location>
    <ligand>
        <name>Zn(2+)</name>
        <dbReference type="ChEBI" id="CHEBI:29105"/>
        <label>1</label>
    </ligand>
</feature>
<feature type="binding site" description="via carbamate group" evidence="1">
    <location>
        <position position="146"/>
    </location>
    <ligand>
        <name>Zn(2+)</name>
        <dbReference type="ChEBI" id="CHEBI:29105"/>
        <label>2</label>
    </ligand>
</feature>
<feature type="binding site" evidence="1">
    <location>
        <position position="186"/>
    </location>
    <ligand>
        <name>Zn(2+)</name>
        <dbReference type="ChEBI" id="CHEBI:29105"/>
        <label>2</label>
    </ligand>
</feature>
<feature type="binding site" evidence="1">
    <location>
        <position position="242"/>
    </location>
    <ligand>
        <name>Zn(2+)</name>
        <dbReference type="ChEBI" id="CHEBI:29105"/>
        <label>2</label>
    </ligand>
</feature>
<feature type="binding site" evidence="1">
    <location>
        <position position="315"/>
    </location>
    <ligand>
        <name>Zn(2+)</name>
        <dbReference type="ChEBI" id="CHEBI:29105"/>
        <label>1</label>
    </ligand>
</feature>
<feature type="modified residue" description="N6-carboxylysine" evidence="1">
    <location>
        <position position="146"/>
    </location>
</feature>
<protein>
    <recommendedName>
        <fullName evidence="1">Allantoinase</fullName>
        <ecNumber evidence="1">3.5.2.5</ecNumber>
    </recommendedName>
    <alternativeName>
        <fullName evidence="1">Allantoin-utilizing enzyme</fullName>
    </alternativeName>
</protein>
<organism>
    <name type="scientific">Salmonella heidelberg (strain SL476)</name>
    <dbReference type="NCBI Taxonomy" id="454169"/>
    <lineage>
        <taxon>Bacteria</taxon>
        <taxon>Pseudomonadati</taxon>
        <taxon>Pseudomonadota</taxon>
        <taxon>Gammaproteobacteria</taxon>
        <taxon>Enterobacterales</taxon>
        <taxon>Enterobacteriaceae</taxon>
        <taxon>Salmonella</taxon>
    </lineage>
</organism>
<comment type="function">
    <text evidence="1">Catalyzes the conversion of allantoin (5-ureidohydantoin) to allantoic acid by hydrolytic cleavage of the five-member hydantoin ring.</text>
</comment>
<comment type="catalytic activity">
    <reaction evidence="1">
        <text>(S)-allantoin + H2O = allantoate + H(+)</text>
        <dbReference type="Rhea" id="RHEA:17029"/>
        <dbReference type="ChEBI" id="CHEBI:15377"/>
        <dbReference type="ChEBI" id="CHEBI:15378"/>
        <dbReference type="ChEBI" id="CHEBI:15678"/>
        <dbReference type="ChEBI" id="CHEBI:17536"/>
        <dbReference type="EC" id="3.5.2.5"/>
    </reaction>
</comment>
<comment type="cofactor">
    <cofactor evidence="1">
        <name>Zn(2+)</name>
        <dbReference type="ChEBI" id="CHEBI:29105"/>
    </cofactor>
    <text evidence="1">Binds 2 Zn(2+) ions per subunit.</text>
</comment>
<comment type="pathway">
    <text evidence="1">Nitrogen metabolism; (S)-allantoin degradation; allantoate from (S)-allantoin: step 1/1.</text>
</comment>
<comment type="subunit">
    <text evidence="1">Homotetramer.</text>
</comment>
<comment type="PTM">
    <text evidence="1">Carboxylation allows a single lysine to coordinate two zinc ions.</text>
</comment>
<comment type="similarity">
    <text evidence="1">Belongs to the metallo-dependent hydrolases superfamily. Allantoinase family.</text>
</comment>
<keyword id="KW-0378">Hydrolase</keyword>
<keyword id="KW-0479">Metal-binding</keyword>
<keyword id="KW-0659">Purine metabolism</keyword>
<keyword id="KW-0862">Zinc</keyword>
<sequence>MSFDLIIKNGTVILENEARVIDIAVQGGKIAAIGENLGEAKNVLDATGLIVSPGMVDAHTHISEPGRTHWEGYETGTRAAAKGGITTMIEMPLNQLPATVDRETIELKFDAAKGKLTIDAAQLGGLVSYNLDRLHELDEVGVVGFKCFVATCGDRGIDNDFRDVNDWQFYKGAQKLGEMDQTVLVHCENALICDELGEEAKREGRVTAHDYVASRPVFTEVEAIRRVLYLAKAAGCRLHVCHISSPEGVEEVTRARQEGQDVTCESCPHYFVLDTDQFEEIGTLAKCSPPIRDQENQKGMWEKLFNGEIDCLVSDHSPCPPEMKAGNIMQAWGGIAGLQNCMDVMFDEAVQKRGMSLPMFGKLMATNAADIFGLKHKGRIAPGKDADLVFIQPDSSYVLKNEDLEYRHKVSPYVGRTIGARITKTILRGDVIYDIEHGFPVPPKGQFILKHQQ</sequence>
<name>ALLB_SALHS</name>
<evidence type="ECO:0000255" key="1">
    <source>
        <dbReference type="HAMAP-Rule" id="MF_01645"/>
    </source>
</evidence>
<gene>
    <name evidence="1" type="primary">allB</name>
    <name type="ordered locus">SeHA_C0630</name>
</gene>
<proteinExistence type="inferred from homology"/>
<reference key="1">
    <citation type="journal article" date="2011" name="J. Bacteriol.">
        <title>Comparative genomics of 28 Salmonella enterica isolates: evidence for CRISPR-mediated adaptive sublineage evolution.</title>
        <authorList>
            <person name="Fricke W.F."/>
            <person name="Mammel M.K."/>
            <person name="McDermott P.F."/>
            <person name="Tartera C."/>
            <person name="White D.G."/>
            <person name="Leclerc J.E."/>
            <person name="Ravel J."/>
            <person name="Cebula T.A."/>
        </authorList>
    </citation>
    <scope>NUCLEOTIDE SEQUENCE [LARGE SCALE GENOMIC DNA]</scope>
    <source>
        <strain>SL476</strain>
    </source>
</reference>
<dbReference type="EC" id="3.5.2.5" evidence="1"/>
<dbReference type="EMBL" id="CP001120">
    <property type="protein sequence ID" value="ACF67879.1"/>
    <property type="molecule type" value="Genomic_DNA"/>
</dbReference>
<dbReference type="RefSeq" id="WP_000006865.1">
    <property type="nucleotide sequence ID" value="NC_011083.1"/>
</dbReference>
<dbReference type="SMR" id="B4T9L5"/>
<dbReference type="KEGG" id="seh:SeHA_C0630"/>
<dbReference type="HOGENOM" id="CLU_015572_4_2_6"/>
<dbReference type="UniPathway" id="UPA00395">
    <property type="reaction ID" value="UER00653"/>
</dbReference>
<dbReference type="Proteomes" id="UP000001866">
    <property type="component" value="Chromosome"/>
</dbReference>
<dbReference type="GO" id="GO:0005737">
    <property type="term" value="C:cytoplasm"/>
    <property type="evidence" value="ECO:0007669"/>
    <property type="project" value="TreeGrafter"/>
</dbReference>
<dbReference type="GO" id="GO:0004038">
    <property type="term" value="F:allantoinase activity"/>
    <property type="evidence" value="ECO:0007669"/>
    <property type="project" value="UniProtKB-UniRule"/>
</dbReference>
<dbReference type="GO" id="GO:0050897">
    <property type="term" value="F:cobalt ion binding"/>
    <property type="evidence" value="ECO:0007669"/>
    <property type="project" value="InterPro"/>
</dbReference>
<dbReference type="GO" id="GO:0008270">
    <property type="term" value="F:zinc ion binding"/>
    <property type="evidence" value="ECO:0007669"/>
    <property type="project" value="InterPro"/>
</dbReference>
<dbReference type="GO" id="GO:0000256">
    <property type="term" value="P:allantoin catabolic process"/>
    <property type="evidence" value="ECO:0007669"/>
    <property type="project" value="UniProtKB-UniRule"/>
</dbReference>
<dbReference type="GO" id="GO:0006145">
    <property type="term" value="P:purine nucleobase catabolic process"/>
    <property type="evidence" value="ECO:0007669"/>
    <property type="project" value="TreeGrafter"/>
</dbReference>
<dbReference type="CDD" id="cd01315">
    <property type="entry name" value="L-HYD_ALN"/>
    <property type="match status" value="1"/>
</dbReference>
<dbReference type="FunFam" id="3.20.20.140:FF:000013">
    <property type="entry name" value="Allantoinase"/>
    <property type="match status" value="1"/>
</dbReference>
<dbReference type="Gene3D" id="3.20.20.140">
    <property type="entry name" value="Metal-dependent hydrolases"/>
    <property type="match status" value="1"/>
</dbReference>
<dbReference type="HAMAP" id="MF_01645">
    <property type="entry name" value="Hydantoinase"/>
    <property type="match status" value="1"/>
</dbReference>
<dbReference type="InterPro" id="IPR017593">
    <property type="entry name" value="Allantoinase"/>
</dbReference>
<dbReference type="InterPro" id="IPR047604">
    <property type="entry name" value="Allantoinase_bact"/>
</dbReference>
<dbReference type="InterPro" id="IPR006680">
    <property type="entry name" value="Amidohydro-rel"/>
</dbReference>
<dbReference type="InterPro" id="IPR050138">
    <property type="entry name" value="DHOase/Allantoinase_Hydrolase"/>
</dbReference>
<dbReference type="InterPro" id="IPR011059">
    <property type="entry name" value="Metal-dep_hydrolase_composite"/>
</dbReference>
<dbReference type="InterPro" id="IPR032466">
    <property type="entry name" value="Metal_Hydrolase"/>
</dbReference>
<dbReference type="NCBIfam" id="TIGR03178">
    <property type="entry name" value="allantoinase"/>
    <property type="match status" value="1"/>
</dbReference>
<dbReference type="NCBIfam" id="NF005960">
    <property type="entry name" value="PRK08044.1"/>
    <property type="match status" value="1"/>
</dbReference>
<dbReference type="PANTHER" id="PTHR43668">
    <property type="entry name" value="ALLANTOINASE"/>
    <property type="match status" value="1"/>
</dbReference>
<dbReference type="PANTHER" id="PTHR43668:SF4">
    <property type="entry name" value="ALLANTOINASE"/>
    <property type="match status" value="1"/>
</dbReference>
<dbReference type="Pfam" id="PF01979">
    <property type="entry name" value="Amidohydro_1"/>
    <property type="match status" value="1"/>
</dbReference>
<dbReference type="SUPFAM" id="SSF51338">
    <property type="entry name" value="Composite domain of metallo-dependent hydrolases"/>
    <property type="match status" value="1"/>
</dbReference>
<dbReference type="SUPFAM" id="SSF51556">
    <property type="entry name" value="Metallo-dependent hydrolases"/>
    <property type="match status" value="1"/>
</dbReference>